<comment type="function">
    <text evidence="1">NDH-1 shuttles electrons from NADH, via FMN and iron-sulfur (Fe-S) centers, to quinones in the respiratory chain. The immediate electron acceptor for the enzyme in this species is believed to be ubiquinone. Couples the redox reaction to proton translocation (for every two electrons transferred, four hydrogen ions are translocated across the cytoplasmic membrane), and thus conserves the redox energy in a proton gradient.</text>
</comment>
<comment type="catalytic activity">
    <reaction evidence="1">
        <text>a quinone + NADH + 5 H(+)(in) = a quinol + NAD(+) + 4 H(+)(out)</text>
        <dbReference type="Rhea" id="RHEA:57888"/>
        <dbReference type="ChEBI" id="CHEBI:15378"/>
        <dbReference type="ChEBI" id="CHEBI:24646"/>
        <dbReference type="ChEBI" id="CHEBI:57540"/>
        <dbReference type="ChEBI" id="CHEBI:57945"/>
        <dbReference type="ChEBI" id="CHEBI:132124"/>
    </reaction>
</comment>
<comment type="subunit">
    <text evidence="1">NDH-1 is composed of 14 different subunits. Subunits NuoA, H, J, K, L, M, N constitute the membrane sector of the complex.</text>
</comment>
<comment type="subcellular location">
    <subcellularLocation>
        <location evidence="1">Cell inner membrane</location>
        <topology evidence="1">Multi-pass membrane protein</topology>
    </subcellularLocation>
</comment>
<comment type="similarity">
    <text evidence="1">Belongs to the complex I subunit 4L family.</text>
</comment>
<gene>
    <name evidence="1" type="primary">nuoK</name>
    <name type="ordered locus">NMC0248</name>
</gene>
<proteinExistence type="inferred from homology"/>
<dbReference type="EC" id="7.1.1.-" evidence="1"/>
<dbReference type="EMBL" id="AM421808">
    <property type="protein sequence ID" value="CAM09562.1"/>
    <property type="molecule type" value="Genomic_DNA"/>
</dbReference>
<dbReference type="RefSeq" id="WP_002215628.1">
    <property type="nucleotide sequence ID" value="NC_008767.1"/>
</dbReference>
<dbReference type="SMR" id="A1KRT3"/>
<dbReference type="GeneID" id="93387341"/>
<dbReference type="KEGG" id="nmc:NMC0248"/>
<dbReference type="HOGENOM" id="CLU_144724_2_0_4"/>
<dbReference type="Proteomes" id="UP000002286">
    <property type="component" value="Chromosome"/>
</dbReference>
<dbReference type="GO" id="GO:0030964">
    <property type="term" value="C:NADH dehydrogenase complex"/>
    <property type="evidence" value="ECO:0007669"/>
    <property type="project" value="TreeGrafter"/>
</dbReference>
<dbReference type="GO" id="GO:0005886">
    <property type="term" value="C:plasma membrane"/>
    <property type="evidence" value="ECO:0007669"/>
    <property type="project" value="UniProtKB-SubCell"/>
</dbReference>
<dbReference type="GO" id="GO:0050136">
    <property type="term" value="F:NADH:ubiquinone reductase (non-electrogenic) activity"/>
    <property type="evidence" value="ECO:0007669"/>
    <property type="project" value="UniProtKB-UniRule"/>
</dbReference>
<dbReference type="GO" id="GO:0048038">
    <property type="term" value="F:quinone binding"/>
    <property type="evidence" value="ECO:0007669"/>
    <property type="project" value="UniProtKB-KW"/>
</dbReference>
<dbReference type="GO" id="GO:0042773">
    <property type="term" value="P:ATP synthesis coupled electron transport"/>
    <property type="evidence" value="ECO:0007669"/>
    <property type="project" value="InterPro"/>
</dbReference>
<dbReference type="FunFam" id="1.10.287.3510:FF:000001">
    <property type="entry name" value="NADH-quinone oxidoreductase subunit K"/>
    <property type="match status" value="1"/>
</dbReference>
<dbReference type="Gene3D" id="1.10.287.3510">
    <property type="match status" value="1"/>
</dbReference>
<dbReference type="HAMAP" id="MF_01456">
    <property type="entry name" value="NDH1_NuoK"/>
    <property type="match status" value="1"/>
</dbReference>
<dbReference type="InterPro" id="IPR001133">
    <property type="entry name" value="NADH_UbQ_OxRdtase_chain4L/K"/>
</dbReference>
<dbReference type="InterPro" id="IPR039428">
    <property type="entry name" value="NUOK/Mnh_C1-like"/>
</dbReference>
<dbReference type="NCBIfam" id="NF004320">
    <property type="entry name" value="PRK05715.1-2"/>
    <property type="match status" value="1"/>
</dbReference>
<dbReference type="NCBIfam" id="NF004321">
    <property type="entry name" value="PRK05715.1-3"/>
    <property type="match status" value="1"/>
</dbReference>
<dbReference type="NCBIfam" id="NF004323">
    <property type="entry name" value="PRK05715.1-5"/>
    <property type="match status" value="1"/>
</dbReference>
<dbReference type="PANTHER" id="PTHR11434:SF21">
    <property type="entry name" value="NADH DEHYDROGENASE SUBUNIT 4L-RELATED"/>
    <property type="match status" value="1"/>
</dbReference>
<dbReference type="PANTHER" id="PTHR11434">
    <property type="entry name" value="NADH-UBIQUINONE OXIDOREDUCTASE SUBUNIT ND4L"/>
    <property type="match status" value="1"/>
</dbReference>
<dbReference type="Pfam" id="PF00420">
    <property type="entry name" value="Oxidored_q2"/>
    <property type="match status" value="1"/>
</dbReference>
<keyword id="KW-0997">Cell inner membrane</keyword>
<keyword id="KW-1003">Cell membrane</keyword>
<keyword id="KW-0472">Membrane</keyword>
<keyword id="KW-0520">NAD</keyword>
<keyword id="KW-0874">Quinone</keyword>
<keyword id="KW-1278">Translocase</keyword>
<keyword id="KW-0812">Transmembrane</keyword>
<keyword id="KW-1133">Transmembrane helix</keyword>
<keyword id="KW-0813">Transport</keyword>
<keyword id="KW-0830">Ubiquinone</keyword>
<sequence>MITLTHYLVLGALLFGISAMGIFMNRKNVLVLLMSIELMLLAVNFNFIAFSQHLGDTAGQIFVFFVLTVAAAESAIGLAIMVLVYRNRQTINVADLDELKG</sequence>
<feature type="chain" id="PRO_0000390143" description="NADH-quinone oxidoreductase subunit K">
    <location>
        <begin position="1"/>
        <end position="101"/>
    </location>
</feature>
<feature type="transmembrane region" description="Helical" evidence="1">
    <location>
        <begin position="4"/>
        <end position="24"/>
    </location>
</feature>
<feature type="transmembrane region" description="Helical" evidence="1">
    <location>
        <begin position="30"/>
        <end position="50"/>
    </location>
</feature>
<feature type="transmembrane region" description="Helical" evidence="1">
    <location>
        <begin position="61"/>
        <end position="81"/>
    </location>
</feature>
<protein>
    <recommendedName>
        <fullName evidence="1">NADH-quinone oxidoreductase subunit K</fullName>
        <ecNumber evidence="1">7.1.1.-</ecNumber>
    </recommendedName>
    <alternativeName>
        <fullName evidence="1">NADH dehydrogenase I subunit K</fullName>
    </alternativeName>
    <alternativeName>
        <fullName evidence="1">NDH-1 subunit K</fullName>
    </alternativeName>
</protein>
<name>NUOK_NEIMF</name>
<organism>
    <name type="scientific">Neisseria meningitidis serogroup C / serotype 2a (strain ATCC 700532 / DSM 15464 / FAM18)</name>
    <dbReference type="NCBI Taxonomy" id="272831"/>
    <lineage>
        <taxon>Bacteria</taxon>
        <taxon>Pseudomonadati</taxon>
        <taxon>Pseudomonadota</taxon>
        <taxon>Betaproteobacteria</taxon>
        <taxon>Neisseriales</taxon>
        <taxon>Neisseriaceae</taxon>
        <taxon>Neisseria</taxon>
    </lineage>
</organism>
<accession>A1KRT3</accession>
<reference key="1">
    <citation type="journal article" date="2007" name="PLoS Genet.">
        <title>Meningococcal genetic variation mechanisms viewed through comparative analysis of serogroup C strain FAM18.</title>
        <authorList>
            <person name="Bentley S.D."/>
            <person name="Vernikos G.S."/>
            <person name="Snyder L.A.S."/>
            <person name="Churcher C."/>
            <person name="Arrowsmith C."/>
            <person name="Chillingworth T."/>
            <person name="Cronin A."/>
            <person name="Davis P.H."/>
            <person name="Holroyd N.E."/>
            <person name="Jagels K."/>
            <person name="Maddison M."/>
            <person name="Moule S."/>
            <person name="Rabbinowitsch E."/>
            <person name="Sharp S."/>
            <person name="Unwin L."/>
            <person name="Whitehead S."/>
            <person name="Quail M.A."/>
            <person name="Achtman M."/>
            <person name="Barrell B.G."/>
            <person name="Saunders N.J."/>
            <person name="Parkhill J."/>
        </authorList>
    </citation>
    <scope>NUCLEOTIDE SEQUENCE [LARGE SCALE GENOMIC DNA]</scope>
    <source>
        <strain>ATCC 700532 / DSM 15464 / FAM18</strain>
    </source>
</reference>
<evidence type="ECO:0000255" key="1">
    <source>
        <dbReference type="HAMAP-Rule" id="MF_01456"/>
    </source>
</evidence>